<gene>
    <name evidence="1" type="primary">pyrC</name>
    <name type="ordered locus">BA_4027</name>
    <name type="ordered locus">GBAA_4027</name>
    <name type="ordered locus">BAS3739</name>
</gene>
<accession>Q81WF0</accession>
<accession>Q6HUJ8</accession>
<accession>Q6KNT3</accession>
<protein>
    <recommendedName>
        <fullName evidence="1">Dihydroorotase</fullName>
        <shortName evidence="1">DHOase</shortName>
        <ecNumber evidence="1 3">3.5.2.3</ecNumber>
    </recommendedName>
</protein>
<proteinExistence type="evidence at protein level"/>
<organism>
    <name type="scientific">Bacillus anthracis</name>
    <dbReference type="NCBI Taxonomy" id="1392"/>
    <lineage>
        <taxon>Bacteria</taxon>
        <taxon>Bacillati</taxon>
        <taxon>Bacillota</taxon>
        <taxon>Bacilli</taxon>
        <taxon>Bacillales</taxon>
        <taxon>Bacillaceae</taxon>
        <taxon>Bacillus</taxon>
        <taxon>Bacillus cereus group</taxon>
    </lineage>
</organism>
<keyword id="KW-0002">3D-structure</keyword>
<keyword id="KW-0378">Hydrolase</keyword>
<keyword id="KW-0479">Metal-binding</keyword>
<keyword id="KW-0665">Pyrimidine biosynthesis</keyword>
<keyword id="KW-1185">Reference proteome</keyword>
<keyword id="KW-0862">Zinc</keyword>
<evidence type="ECO:0000255" key="1">
    <source>
        <dbReference type="HAMAP-Rule" id="MF_00220"/>
    </source>
</evidence>
<evidence type="ECO:0000269" key="2">
    <source>
    </source>
</evidence>
<evidence type="ECO:0000269" key="3">
    <source>
    </source>
</evidence>
<evidence type="ECO:0000305" key="4"/>
<evidence type="ECO:0000305" key="5">
    <source>
    </source>
</evidence>
<evidence type="ECO:0007744" key="6">
    <source>
        <dbReference type="PDB" id="3MPG"/>
    </source>
</evidence>
<evidence type="ECO:0007744" key="7">
    <source>
        <dbReference type="PDB" id="4YIW"/>
    </source>
</evidence>
<evidence type="ECO:0007829" key="8">
    <source>
        <dbReference type="PDB" id="3MPG"/>
    </source>
</evidence>
<evidence type="ECO:0007829" key="9">
    <source>
        <dbReference type="PDB" id="4YIW"/>
    </source>
</evidence>
<feature type="chain" id="PRO_0000325582" description="Dihydroorotase">
    <location>
        <begin position="1"/>
        <end position="428"/>
    </location>
</feature>
<feature type="active site" evidence="1 5">
    <location>
        <position position="304"/>
    </location>
</feature>
<feature type="binding site" evidence="1 2 3 6 7">
    <location>
        <position position="59"/>
    </location>
    <ligand>
        <name>Zn(2+)</name>
        <dbReference type="ChEBI" id="CHEBI:29105"/>
        <label>1</label>
    </ligand>
</feature>
<feature type="binding site" evidence="1 5">
    <location>
        <begin position="61"/>
        <end position="63"/>
    </location>
    <ligand>
        <name>substrate</name>
    </ligand>
</feature>
<feature type="binding site" evidence="1 2 3 6 7">
    <location>
        <position position="61"/>
    </location>
    <ligand>
        <name>Zn(2+)</name>
        <dbReference type="ChEBI" id="CHEBI:29105"/>
        <label>1</label>
    </ligand>
</feature>
<feature type="binding site" evidence="1 5">
    <location>
        <position position="93"/>
    </location>
    <ligand>
        <name>substrate</name>
    </ligand>
</feature>
<feature type="binding site" evidence="1 2 3 6 7">
    <location>
        <position position="151"/>
    </location>
    <ligand>
        <name>Zn(2+)</name>
        <dbReference type="ChEBI" id="CHEBI:29105"/>
        <label>1</label>
    </ligand>
</feature>
<feature type="binding site" evidence="1 2 3 6 7">
    <location>
        <position position="151"/>
    </location>
    <ligand>
        <name>Zn(2+)</name>
        <dbReference type="ChEBI" id="CHEBI:29105"/>
        <label>2</label>
    </ligand>
</feature>
<feature type="binding site" evidence="1 2 3 6 7">
    <location>
        <position position="178"/>
    </location>
    <ligand>
        <name>Zn(2+)</name>
        <dbReference type="ChEBI" id="CHEBI:29105"/>
        <label>2</label>
    </ligand>
</feature>
<feature type="binding site" evidence="1 2 3 6 7">
    <location>
        <position position="231"/>
    </location>
    <ligand>
        <name>Zn(2+)</name>
        <dbReference type="ChEBI" id="CHEBI:29105"/>
        <label>2</label>
    </ligand>
</feature>
<feature type="binding site" evidence="1 5">
    <location>
        <position position="277"/>
    </location>
    <ligand>
        <name>substrate</name>
    </ligand>
</feature>
<feature type="binding site" evidence="5">
    <location>
        <position position="304"/>
    </location>
    <ligand>
        <name>substrate</name>
    </ligand>
</feature>
<feature type="binding site" evidence="1 2 3 6 7">
    <location>
        <position position="304"/>
    </location>
    <ligand>
        <name>Zn(2+)</name>
        <dbReference type="ChEBI" id="CHEBI:29105"/>
        <label>1</label>
    </ligand>
</feature>
<feature type="binding site" evidence="1 5">
    <location>
        <position position="308"/>
    </location>
    <ligand>
        <name>substrate</name>
    </ligand>
</feature>
<feature type="binding site" evidence="1 5">
    <location>
        <begin position="322"/>
        <end position="323"/>
    </location>
    <ligand>
        <name>substrate</name>
    </ligand>
</feature>
<feature type="mutagenesis site" description="Lack of activity." evidence="3">
    <original>R</original>
    <variation>A</variation>
    <location>
        <position position="63"/>
    </location>
</feature>
<feature type="mutagenesis site" description="Decreases activity with carbamoyl aspartate. Lack of activity with dihydroorotate." evidence="3">
    <original>N</original>
    <variation>A</variation>
    <location>
        <position position="93"/>
    </location>
</feature>
<feature type="mutagenesis site" description="Lack of activity." evidence="3">
    <original>D</original>
    <variation>A</variation>
    <location>
        <position position="304"/>
    </location>
</feature>
<feature type="strand" evidence="9">
    <location>
        <begin position="3"/>
        <end position="11"/>
    </location>
</feature>
<feature type="strand" evidence="9">
    <location>
        <begin position="13"/>
        <end position="15"/>
    </location>
</feature>
<feature type="strand" evidence="9">
    <location>
        <begin position="17"/>
        <end position="25"/>
    </location>
</feature>
<feature type="strand" evidence="9">
    <location>
        <begin position="28"/>
        <end position="31"/>
    </location>
</feature>
<feature type="strand" evidence="9">
    <location>
        <begin position="41"/>
        <end position="45"/>
    </location>
</feature>
<feature type="strand" evidence="9">
    <location>
        <begin position="50"/>
        <end position="53"/>
    </location>
</feature>
<feature type="strand" evidence="9">
    <location>
        <begin position="55"/>
        <end position="60"/>
    </location>
</feature>
<feature type="turn" evidence="9">
    <location>
        <begin position="64"/>
        <end position="66"/>
    </location>
</feature>
<feature type="turn" evidence="9">
    <location>
        <begin position="68"/>
        <end position="70"/>
    </location>
</feature>
<feature type="helix" evidence="9">
    <location>
        <begin position="73"/>
        <end position="83"/>
    </location>
</feature>
<feature type="strand" evidence="9">
    <location>
        <begin position="85"/>
        <end position="90"/>
    </location>
</feature>
<feature type="strand" evidence="9">
    <location>
        <begin position="94"/>
        <end position="96"/>
    </location>
</feature>
<feature type="helix" evidence="9">
    <location>
        <begin position="101"/>
        <end position="114"/>
    </location>
</feature>
<feature type="strand" evidence="9">
    <location>
        <begin position="116"/>
        <end position="119"/>
    </location>
</feature>
<feature type="strand" evidence="8">
    <location>
        <begin position="123"/>
        <end position="126"/>
    </location>
</feature>
<feature type="helix" evidence="9">
    <location>
        <begin position="127"/>
        <end position="129"/>
    </location>
</feature>
<feature type="strand" evidence="9">
    <location>
        <begin position="131"/>
        <end position="134"/>
    </location>
</feature>
<feature type="helix" evidence="9">
    <location>
        <begin position="137"/>
        <end position="142"/>
    </location>
</feature>
<feature type="helix" evidence="9">
    <location>
        <begin position="158"/>
        <end position="170"/>
    </location>
</feature>
<feature type="strand" evidence="9">
    <location>
        <begin position="175"/>
        <end position="177"/>
    </location>
</feature>
<feature type="helix" evidence="9">
    <location>
        <begin position="182"/>
        <end position="184"/>
    </location>
</feature>
<feature type="strand" evidence="9">
    <location>
        <begin position="189"/>
        <end position="193"/>
    </location>
</feature>
<feature type="helix" evidence="9">
    <location>
        <begin position="194"/>
        <end position="199"/>
    </location>
</feature>
<feature type="helix" evidence="9">
    <location>
        <begin position="207"/>
        <end position="222"/>
    </location>
</feature>
<feature type="strand" evidence="9">
    <location>
        <begin position="227"/>
        <end position="229"/>
    </location>
</feature>
<feature type="helix" evidence="9">
    <location>
        <begin position="235"/>
        <end position="247"/>
    </location>
</feature>
<feature type="strand" evidence="9">
    <location>
        <begin position="251"/>
        <end position="255"/>
    </location>
</feature>
<feature type="helix" evidence="9">
    <location>
        <begin position="257"/>
        <end position="261"/>
    </location>
</feature>
<feature type="helix" evidence="9">
    <location>
        <begin position="264"/>
        <end position="266"/>
    </location>
</feature>
<feature type="helix" evidence="9">
    <location>
        <begin position="272"/>
        <end position="274"/>
    </location>
</feature>
<feature type="helix" evidence="9">
    <location>
        <begin position="283"/>
        <end position="294"/>
    </location>
</feature>
<feature type="strand" evidence="8">
    <location>
        <begin position="296"/>
        <end position="298"/>
    </location>
</feature>
<feature type="helix" evidence="9">
    <location>
        <begin position="310"/>
        <end position="313"/>
    </location>
</feature>
<feature type="turn" evidence="9">
    <location>
        <begin position="317"/>
        <end position="319"/>
    </location>
</feature>
<feature type="helix" evidence="9">
    <location>
        <begin position="327"/>
        <end position="329"/>
    </location>
</feature>
<feature type="helix" evidence="9">
    <location>
        <begin position="330"/>
        <end position="337"/>
    </location>
</feature>
<feature type="turn" evidence="9">
    <location>
        <begin position="338"/>
        <end position="342"/>
    </location>
</feature>
<feature type="helix" evidence="9">
    <location>
        <begin position="346"/>
        <end position="352"/>
    </location>
</feature>
<feature type="helix" evidence="9">
    <location>
        <begin position="355"/>
        <end position="361"/>
    </location>
</feature>
<feature type="strand" evidence="9">
    <location>
        <begin position="376"/>
        <end position="382"/>
    </location>
</feature>
<feature type="helix" evidence="9">
    <location>
        <begin position="389"/>
        <end position="391"/>
    </location>
</feature>
<feature type="strand" evidence="9">
    <location>
        <begin position="393"/>
        <end position="395"/>
    </location>
</feature>
<feature type="strand" evidence="9">
    <location>
        <begin position="409"/>
        <end position="415"/>
    </location>
</feature>
<feature type="strand" evidence="9">
    <location>
        <begin position="418"/>
        <end position="422"/>
    </location>
</feature>
<dbReference type="EC" id="3.5.2.3" evidence="1 3"/>
<dbReference type="EMBL" id="AE016879">
    <property type="protein sequence ID" value="AAP27754.1"/>
    <property type="molecule type" value="Genomic_DNA"/>
</dbReference>
<dbReference type="EMBL" id="AE017334">
    <property type="protein sequence ID" value="AAT33144.1"/>
    <property type="molecule type" value="Genomic_DNA"/>
</dbReference>
<dbReference type="EMBL" id="AE017225">
    <property type="protein sequence ID" value="AAT56041.1"/>
    <property type="molecule type" value="Genomic_DNA"/>
</dbReference>
<dbReference type="RefSeq" id="NP_846268.1">
    <property type="nucleotide sequence ID" value="NC_003997.3"/>
</dbReference>
<dbReference type="RefSeq" id="WP_001108379.1">
    <property type="nucleotide sequence ID" value="NZ_WXXJ01000026.1"/>
</dbReference>
<dbReference type="RefSeq" id="YP_029990.1">
    <property type="nucleotide sequence ID" value="NC_005945.1"/>
</dbReference>
<dbReference type="PDB" id="3MPG">
    <property type="method" value="X-ray"/>
    <property type="resolution" value="2.60 A"/>
    <property type="chains" value="A/B=1-428"/>
</dbReference>
<dbReference type="PDB" id="4YIW">
    <property type="method" value="X-ray"/>
    <property type="resolution" value="2.45 A"/>
    <property type="chains" value="A/B=1-428"/>
</dbReference>
<dbReference type="PDBsum" id="3MPG"/>
<dbReference type="PDBsum" id="4YIW"/>
<dbReference type="SMR" id="Q81WF0"/>
<dbReference type="IntAct" id="Q81WF0">
    <property type="interactions" value="2"/>
</dbReference>
<dbReference type="STRING" id="261594.GBAA_4027"/>
<dbReference type="BindingDB" id="Q81WF0"/>
<dbReference type="ChEMBL" id="CHEMBL3102690"/>
<dbReference type="DNASU" id="1086660"/>
<dbReference type="GeneID" id="45023717"/>
<dbReference type="KEGG" id="ban:BA_4027"/>
<dbReference type="KEGG" id="bar:GBAA_4027"/>
<dbReference type="KEGG" id="bat:BAS3739"/>
<dbReference type="PATRIC" id="fig|198094.11.peg.3998"/>
<dbReference type="eggNOG" id="COG0044">
    <property type="taxonomic scope" value="Bacteria"/>
</dbReference>
<dbReference type="HOGENOM" id="CLU_015572_1_0_9"/>
<dbReference type="OMA" id="SRLHVCH"/>
<dbReference type="OrthoDB" id="9765462at2"/>
<dbReference type="BRENDA" id="3.5.2.3">
    <property type="organism ID" value="634"/>
</dbReference>
<dbReference type="UniPathway" id="UPA00070">
    <property type="reaction ID" value="UER00117"/>
</dbReference>
<dbReference type="EvolutionaryTrace" id="Q81WF0"/>
<dbReference type="Proteomes" id="UP000000427">
    <property type="component" value="Chromosome"/>
</dbReference>
<dbReference type="Proteomes" id="UP000000594">
    <property type="component" value="Chromosome"/>
</dbReference>
<dbReference type="GO" id="GO:0005737">
    <property type="term" value="C:cytoplasm"/>
    <property type="evidence" value="ECO:0007669"/>
    <property type="project" value="TreeGrafter"/>
</dbReference>
<dbReference type="GO" id="GO:0004038">
    <property type="term" value="F:allantoinase activity"/>
    <property type="evidence" value="ECO:0007669"/>
    <property type="project" value="TreeGrafter"/>
</dbReference>
<dbReference type="GO" id="GO:0004151">
    <property type="term" value="F:dihydroorotase activity"/>
    <property type="evidence" value="ECO:0007669"/>
    <property type="project" value="UniProtKB-UniRule"/>
</dbReference>
<dbReference type="GO" id="GO:0008270">
    <property type="term" value="F:zinc ion binding"/>
    <property type="evidence" value="ECO:0007669"/>
    <property type="project" value="UniProtKB-UniRule"/>
</dbReference>
<dbReference type="GO" id="GO:0044205">
    <property type="term" value="P:'de novo' UMP biosynthetic process"/>
    <property type="evidence" value="ECO:0007669"/>
    <property type="project" value="UniProtKB-UniRule"/>
</dbReference>
<dbReference type="GO" id="GO:0006145">
    <property type="term" value="P:purine nucleobase catabolic process"/>
    <property type="evidence" value="ECO:0007669"/>
    <property type="project" value="TreeGrafter"/>
</dbReference>
<dbReference type="CDD" id="cd01317">
    <property type="entry name" value="DHOase_IIa"/>
    <property type="match status" value="1"/>
</dbReference>
<dbReference type="FunFam" id="2.30.40.10:FF:000007">
    <property type="entry name" value="Dihydroorotase"/>
    <property type="match status" value="1"/>
</dbReference>
<dbReference type="FunFam" id="3.20.20.140:FF:000025">
    <property type="entry name" value="Dihydroorotase"/>
    <property type="match status" value="1"/>
</dbReference>
<dbReference type="Gene3D" id="3.20.20.140">
    <property type="entry name" value="Metal-dependent hydrolases"/>
    <property type="match status" value="1"/>
</dbReference>
<dbReference type="Gene3D" id="2.30.40.10">
    <property type="entry name" value="Urease, subunit C, domain 1"/>
    <property type="match status" value="2"/>
</dbReference>
<dbReference type="HAMAP" id="MF_00220_B">
    <property type="entry name" value="PyrC_classI_B"/>
    <property type="match status" value="1"/>
</dbReference>
<dbReference type="InterPro" id="IPR006680">
    <property type="entry name" value="Amidohydro-rel"/>
</dbReference>
<dbReference type="InterPro" id="IPR004722">
    <property type="entry name" value="DHOase"/>
</dbReference>
<dbReference type="InterPro" id="IPR050138">
    <property type="entry name" value="DHOase/Allantoinase_Hydrolase"/>
</dbReference>
<dbReference type="InterPro" id="IPR002195">
    <property type="entry name" value="Dihydroorotase_CS"/>
</dbReference>
<dbReference type="InterPro" id="IPR011059">
    <property type="entry name" value="Metal-dep_hydrolase_composite"/>
</dbReference>
<dbReference type="InterPro" id="IPR032466">
    <property type="entry name" value="Metal_Hydrolase"/>
</dbReference>
<dbReference type="NCBIfam" id="NF006837">
    <property type="entry name" value="PRK09357.1-2"/>
    <property type="match status" value="1"/>
</dbReference>
<dbReference type="NCBIfam" id="TIGR00857">
    <property type="entry name" value="pyrC_multi"/>
    <property type="match status" value="1"/>
</dbReference>
<dbReference type="PANTHER" id="PTHR43668">
    <property type="entry name" value="ALLANTOINASE"/>
    <property type="match status" value="1"/>
</dbReference>
<dbReference type="PANTHER" id="PTHR43668:SF2">
    <property type="entry name" value="ALLANTOINASE"/>
    <property type="match status" value="1"/>
</dbReference>
<dbReference type="Pfam" id="PF01979">
    <property type="entry name" value="Amidohydro_1"/>
    <property type="match status" value="1"/>
</dbReference>
<dbReference type="SUPFAM" id="SSF51338">
    <property type="entry name" value="Composite domain of metallo-dependent hydrolases"/>
    <property type="match status" value="1"/>
</dbReference>
<dbReference type="SUPFAM" id="SSF51556">
    <property type="entry name" value="Metallo-dependent hydrolases"/>
    <property type="match status" value="1"/>
</dbReference>
<dbReference type="PROSITE" id="PS00482">
    <property type="entry name" value="DIHYDROOROTASE_1"/>
    <property type="match status" value="1"/>
</dbReference>
<dbReference type="PROSITE" id="PS00483">
    <property type="entry name" value="DIHYDROOROTASE_2"/>
    <property type="match status" value="1"/>
</dbReference>
<reference key="1">
    <citation type="journal article" date="2003" name="Nature">
        <title>The genome sequence of Bacillus anthracis Ames and comparison to closely related bacteria.</title>
        <authorList>
            <person name="Read T.D."/>
            <person name="Peterson S.N."/>
            <person name="Tourasse N.J."/>
            <person name="Baillie L.W."/>
            <person name="Paulsen I.T."/>
            <person name="Nelson K.E."/>
            <person name="Tettelin H."/>
            <person name="Fouts D.E."/>
            <person name="Eisen J.A."/>
            <person name="Gill S.R."/>
            <person name="Holtzapple E.K."/>
            <person name="Okstad O.A."/>
            <person name="Helgason E."/>
            <person name="Rilstone J."/>
            <person name="Wu M."/>
            <person name="Kolonay J.F."/>
            <person name="Beanan M.J."/>
            <person name="Dodson R.J."/>
            <person name="Brinkac L.M."/>
            <person name="Gwinn M.L."/>
            <person name="DeBoy R.T."/>
            <person name="Madpu R."/>
            <person name="Daugherty S.C."/>
            <person name="Durkin A.S."/>
            <person name="Haft D.H."/>
            <person name="Nelson W.C."/>
            <person name="Peterson J.D."/>
            <person name="Pop M."/>
            <person name="Khouri H.M."/>
            <person name="Radune D."/>
            <person name="Benton J.L."/>
            <person name="Mahamoud Y."/>
            <person name="Jiang L."/>
            <person name="Hance I.R."/>
            <person name="Weidman J.F."/>
            <person name="Berry K.J."/>
            <person name="Plaut R.D."/>
            <person name="Wolf A.M."/>
            <person name="Watkins K.L."/>
            <person name="Nierman W.C."/>
            <person name="Hazen A."/>
            <person name="Cline R.T."/>
            <person name="Redmond C."/>
            <person name="Thwaite J.E."/>
            <person name="White O."/>
            <person name="Salzberg S.L."/>
            <person name="Thomason B."/>
            <person name="Friedlander A.M."/>
            <person name="Koehler T.M."/>
            <person name="Hanna P.C."/>
            <person name="Kolstoe A.-B."/>
            <person name="Fraser C.M."/>
        </authorList>
    </citation>
    <scope>NUCLEOTIDE SEQUENCE [LARGE SCALE GENOMIC DNA]</scope>
    <source>
        <strain>Ames / isolate Porton</strain>
    </source>
</reference>
<reference key="2">
    <citation type="submission" date="2004-01" db="EMBL/GenBank/DDBJ databases">
        <title>Complete genome sequence of Bacillus anthracis Sterne.</title>
        <authorList>
            <person name="Brettin T.S."/>
            <person name="Bruce D."/>
            <person name="Challacombe J.F."/>
            <person name="Gilna P."/>
            <person name="Han C."/>
            <person name="Hill K."/>
            <person name="Hitchcock P."/>
            <person name="Jackson P."/>
            <person name="Keim P."/>
            <person name="Longmire J."/>
            <person name="Lucas S."/>
            <person name="Okinaka R."/>
            <person name="Richardson P."/>
            <person name="Rubin E."/>
            <person name="Tice H."/>
        </authorList>
    </citation>
    <scope>NUCLEOTIDE SEQUENCE [LARGE SCALE GENOMIC DNA]</scope>
    <source>
        <strain>Sterne</strain>
    </source>
</reference>
<reference key="3">
    <citation type="journal article" date="2009" name="J. Bacteriol.">
        <title>The complete genome sequence of Bacillus anthracis Ames 'Ancestor'.</title>
        <authorList>
            <person name="Ravel J."/>
            <person name="Jiang L."/>
            <person name="Stanley S.T."/>
            <person name="Wilson M.R."/>
            <person name="Decker R.S."/>
            <person name="Read T.D."/>
            <person name="Worsham P."/>
            <person name="Keim P.S."/>
            <person name="Salzberg S.L."/>
            <person name="Fraser-Liggett C.M."/>
            <person name="Rasko D.A."/>
        </authorList>
    </citation>
    <scope>NUCLEOTIDE SEQUENCE [LARGE SCALE GENOMIC DNA]</scope>
    <source>
        <strain>Ames ancestor</strain>
    </source>
</reference>
<reference evidence="6" key="4">
    <citation type="journal article" date="2010" name="Acta Crystallogr. F">
        <title>Structure of dihydroorotase from Bacillus anthracis at 2.6A resolution.</title>
        <authorList>
            <person name="Mehboob S."/>
            <person name="Mulhearn D.C."/>
            <person name="Truong K."/>
            <person name="Johnson M.E."/>
            <person name="Santarsiero B.D."/>
        </authorList>
    </citation>
    <scope>X-RAY CRYSTALLOGRAPHY (2.60 ANGSTROMS) IN COMPLEX WITH ZINC</scope>
    <scope>COFACTOR</scope>
    <scope>SUBUNIT</scope>
    <source>
        <strain>Sterne</strain>
    </source>
</reference>
<reference evidence="7" key="5">
    <citation type="journal article" date="2016" name="Bioorg. Med. Chem.">
        <title>Ca-asp bound X-ray structure and inhibition of Bacillus anthracis dihydroorotase (DHOase).</title>
        <authorList>
            <person name="Rice A.J."/>
            <person name="Lei H."/>
            <person name="Santarsiero B.D."/>
            <person name="Lee H."/>
            <person name="Johnson M.E."/>
        </authorList>
    </citation>
    <scope>X-RAY CRYSTALLOGRAPHY (2.45 ANGSTROMS) IN COMPLEX WITH CARBAMOYL ASPARTATE AND ZINC</scope>
    <scope>FUNCTION</scope>
    <scope>CATALYTIC ACTIVITY</scope>
    <scope>COFACTOR</scope>
    <scope>BIOPHYSICOCHEMICAL PROPERTIES</scope>
    <scope>SUBUNIT</scope>
    <scope>ACTIVE SITE</scope>
    <scope>MUTAGENESIS OF ARG-63; ASN-93 AND ASP-304</scope>
    <source>
        <strain>Sterne</strain>
    </source>
</reference>
<sequence length="428" mass="46656">MNYLFKNGRYMNEEGKIVATDLLVQDGKIAKVAENITADNAEVIDVNGKLIAPGLVDVHVHLREPGGEHKETIETGTLAAAKGGFTTICAMPNTRPVPDCREHMEDLQNRIKEKAHVNVLPYGAITVRQAGSEMTDFETLKELGAFAFTDDGVGVQDASMMLAAMKRAAKLNMAVVAHCEENTLINKGCVHEGKFSEKHGLNGIPSVCESVHIARDILLAEAADCHYHVCHVSTKGSVRVIRDAKRAGIKVTAEVTPHHLVLCEDDIPSADPNFKMNPPLRGKEDHEALIEGLLDGTIDMIATDHAPHTAEEKAQGIERAPFGITGFETAFPLLYTNLVKKGIITLEQLIQFLTEKPADTFGLEAGRLKEGRTADITIIDLEQEEEIDPTTFLSKGKNTPFAGWKCQGWPVMTIVGGKIAWQKESALV</sequence>
<name>PYRC_BACAN</name>
<comment type="function">
    <text evidence="1 3">Catalyzes the reversible cyclization of carbamoyl aspartate to dihydroorotate.</text>
</comment>
<comment type="catalytic activity">
    <reaction evidence="1 3">
        <text>(S)-dihydroorotate + H2O = N-carbamoyl-L-aspartate + H(+)</text>
        <dbReference type="Rhea" id="RHEA:24296"/>
        <dbReference type="ChEBI" id="CHEBI:15377"/>
        <dbReference type="ChEBI" id="CHEBI:15378"/>
        <dbReference type="ChEBI" id="CHEBI:30864"/>
        <dbReference type="ChEBI" id="CHEBI:32814"/>
        <dbReference type="EC" id="3.5.2.3"/>
    </reaction>
</comment>
<comment type="cofactor">
    <cofactor evidence="1 2 3">
        <name>Zn(2+)</name>
        <dbReference type="ChEBI" id="CHEBI:29105"/>
    </cofactor>
    <text evidence="1 2 3">Binds 2 Zn(2+) ions per subunit.</text>
</comment>
<comment type="biophysicochemical properties">
    <kinetics>
        <KM evidence="3">114 uM for dihydroorotate</KM>
        <KM evidence="3">112 uM for carbamoyl aspartate</KM>
        <text evidence="3">kcat is 1.9 sec(-1) with dihydroorotate as substrate. kcat is 2.1 sec(-1) with carbamoyl aspartate as substrate.</text>
    </kinetics>
</comment>
<comment type="pathway">
    <text evidence="1">Pyrimidine metabolism; UMP biosynthesis via de novo pathway; (S)-dihydroorotate from bicarbonate: step 3/3.</text>
</comment>
<comment type="subunit">
    <text evidence="2 3">Homodimer.</text>
</comment>
<comment type="similarity">
    <text evidence="1 4">Belongs to the metallo-dependent hydrolases superfamily. DHOase family. Class I DHOase subfamily.</text>
</comment>